<proteinExistence type="inferred from homology"/>
<protein>
    <recommendedName>
        <fullName evidence="1">Bifunctional protein HldE</fullName>
    </recommendedName>
    <domain>
        <recommendedName>
            <fullName evidence="1">D-beta-D-heptose 7-phosphate kinase</fullName>
            <ecNumber evidence="1">2.7.1.167</ecNumber>
        </recommendedName>
        <alternativeName>
            <fullName evidence="1">D-beta-D-heptose 7-phosphotransferase</fullName>
        </alternativeName>
        <alternativeName>
            <fullName evidence="1">D-glycero-beta-D-manno-heptose-7-phosphate kinase</fullName>
        </alternativeName>
    </domain>
    <domain>
        <recommendedName>
            <fullName evidence="1">D-beta-D-heptose 1-phosphate adenylyltransferase</fullName>
            <ecNumber evidence="1">2.7.7.70</ecNumber>
        </recommendedName>
        <alternativeName>
            <fullName evidence="1">D-glycero-beta-D-manno-heptose 1-phosphate adenylyltransferase</fullName>
        </alternativeName>
    </domain>
</protein>
<organism>
    <name type="scientific">Helicobacter pylori (strain G27)</name>
    <dbReference type="NCBI Taxonomy" id="563041"/>
    <lineage>
        <taxon>Bacteria</taxon>
        <taxon>Pseudomonadati</taxon>
        <taxon>Campylobacterota</taxon>
        <taxon>Epsilonproteobacteria</taxon>
        <taxon>Campylobacterales</taxon>
        <taxon>Helicobacteraceae</taxon>
        <taxon>Helicobacter</taxon>
    </lineage>
</organism>
<evidence type="ECO:0000255" key="1">
    <source>
        <dbReference type="HAMAP-Rule" id="MF_01603"/>
    </source>
</evidence>
<keyword id="KW-0067">ATP-binding</keyword>
<keyword id="KW-0119">Carbohydrate metabolism</keyword>
<keyword id="KW-0418">Kinase</keyword>
<keyword id="KW-0511">Multifunctional enzyme</keyword>
<keyword id="KW-0547">Nucleotide-binding</keyword>
<keyword id="KW-0548">Nucleotidyltransferase</keyword>
<keyword id="KW-1185">Reference proteome</keyword>
<keyword id="KW-0808">Transferase</keyword>
<gene>
    <name evidence="1" type="primary">hldE</name>
    <name type="ordered locus">HPG27_812</name>
</gene>
<dbReference type="EC" id="2.7.1.167" evidence="1"/>
<dbReference type="EC" id="2.7.7.70" evidence="1"/>
<dbReference type="EMBL" id="CP001173">
    <property type="protein sequence ID" value="ACI27567.1"/>
    <property type="molecule type" value="Genomic_DNA"/>
</dbReference>
<dbReference type="RefSeq" id="WP_000723183.1">
    <property type="nucleotide sequence ID" value="NC_011333.1"/>
</dbReference>
<dbReference type="SMR" id="B5Z7L8"/>
<dbReference type="KEGG" id="hpg:HPG27_812"/>
<dbReference type="HOGENOM" id="CLU_021150_2_1_7"/>
<dbReference type="UniPathway" id="UPA00356">
    <property type="reaction ID" value="UER00437"/>
</dbReference>
<dbReference type="UniPathway" id="UPA00356">
    <property type="reaction ID" value="UER00439"/>
</dbReference>
<dbReference type="Proteomes" id="UP000001735">
    <property type="component" value="Chromosome"/>
</dbReference>
<dbReference type="GO" id="GO:0005829">
    <property type="term" value="C:cytosol"/>
    <property type="evidence" value="ECO:0007669"/>
    <property type="project" value="TreeGrafter"/>
</dbReference>
<dbReference type="GO" id="GO:0005524">
    <property type="term" value="F:ATP binding"/>
    <property type="evidence" value="ECO:0007669"/>
    <property type="project" value="UniProtKB-UniRule"/>
</dbReference>
<dbReference type="GO" id="GO:0033785">
    <property type="term" value="F:heptose 7-phosphate kinase activity"/>
    <property type="evidence" value="ECO:0007669"/>
    <property type="project" value="UniProtKB-UniRule"/>
</dbReference>
<dbReference type="GO" id="GO:0033786">
    <property type="term" value="F:heptose-1-phosphate adenylyltransferase activity"/>
    <property type="evidence" value="ECO:0007669"/>
    <property type="project" value="UniProtKB-UniRule"/>
</dbReference>
<dbReference type="GO" id="GO:0016773">
    <property type="term" value="F:phosphotransferase activity, alcohol group as acceptor"/>
    <property type="evidence" value="ECO:0007669"/>
    <property type="project" value="InterPro"/>
</dbReference>
<dbReference type="GO" id="GO:0097171">
    <property type="term" value="P:ADP-L-glycero-beta-D-manno-heptose biosynthetic process"/>
    <property type="evidence" value="ECO:0007669"/>
    <property type="project" value="UniProtKB-UniPathway"/>
</dbReference>
<dbReference type="CDD" id="cd01172">
    <property type="entry name" value="RfaE_like"/>
    <property type="match status" value="1"/>
</dbReference>
<dbReference type="Gene3D" id="3.40.1190.20">
    <property type="match status" value="1"/>
</dbReference>
<dbReference type="Gene3D" id="3.40.50.620">
    <property type="entry name" value="HUPs"/>
    <property type="match status" value="1"/>
</dbReference>
<dbReference type="HAMAP" id="MF_01603">
    <property type="entry name" value="HldE"/>
    <property type="match status" value="1"/>
</dbReference>
<dbReference type="InterPro" id="IPR023030">
    <property type="entry name" value="Bifunc_HldE"/>
</dbReference>
<dbReference type="InterPro" id="IPR004821">
    <property type="entry name" value="Cyt_trans-like"/>
</dbReference>
<dbReference type="InterPro" id="IPR011611">
    <property type="entry name" value="PfkB_dom"/>
</dbReference>
<dbReference type="InterPro" id="IPR011913">
    <property type="entry name" value="RfaE_dom_I"/>
</dbReference>
<dbReference type="InterPro" id="IPR011914">
    <property type="entry name" value="RfaE_dom_II"/>
</dbReference>
<dbReference type="InterPro" id="IPR029056">
    <property type="entry name" value="Ribokinase-like"/>
</dbReference>
<dbReference type="InterPro" id="IPR014729">
    <property type="entry name" value="Rossmann-like_a/b/a_fold"/>
</dbReference>
<dbReference type="NCBIfam" id="TIGR00125">
    <property type="entry name" value="cyt_tran_rel"/>
    <property type="match status" value="1"/>
</dbReference>
<dbReference type="NCBIfam" id="TIGR02198">
    <property type="entry name" value="rfaE_dom_I"/>
    <property type="match status" value="1"/>
</dbReference>
<dbReference type="NCBIfam" id="TIGR02199">
    <property type="entry name" value="rfaE_dom_II"/>
    <property type="match status" value="1"/>
</dbReference>
<dbReference type="PANTHER" id="PTHR46969">
    <property type="entry name" value="BIFUNCTIONAL PROTEIN HLDE"/>
    <property type="match status" value="1"/>
</dbReference>
<dbReference type="PANTHER" id="PTHR46969:SF1">
    <property type="entry name" value="BIFUNCTIONAL PROTEIN HLDE"/>
    <property type="match status" value="1"/>
</dbReference>
<dbReference type="Pfam" id="PF01467">
    <property type="entry name" value="CTP_transf_like"/>
    <property type="match status" value="1"/>
</dbReference>
<dbReference type="Pfam" id="PF00294">
    <property type="entry name" value="PfkB"/>
    <property type="match status" value="1"/>
</dbReference>
<dbReference type="SUPFAM" id="SSF52374">
    <property type="entry name" value="Nucleotidylyl transferase"/>
    <property type="match status" value="1"/>
</dbReference>
<dbReference type="SUPFAM" id="SSF53613">
    <property type="entry name" value="Ribokinase-like"/>
    <property type="match status" value="1"/>
</dbReference>
<name>HLDE_HELPG</name>
<comment type="function">
    <text evidence="1">Catalyzes the phosphorylation of D-glycero-D-manno-heptose 7-phosphate at the C-1 position to selectively form D-glycero-beta-D-manno-heptose-1,7-bisphosphate.</text>
</comment>
<comment type="function">
    <text evidence="1">Catalyzes the ADP transfer from ATP to D-glycero-beta-D-manno-heptose 1-phosphate, yielding ADP-D-glycero-beta-D-manno-heptose.</text>
</comment>
<comment type="catalytic activity">
    <reaction evidence="1">
        <text>D-glycero-beta-D-manno-heptose 7-phosphate + ATP = D-glycero-beta-D-manno-heptose 1,7-bisphosphate + ADP + H(+)</text>
        <dbReference type="Rhea" id="RHEA:27473"/>
        <dbReference type="ChEBI" id="CHEBI:15378"/>
        <dbReference type="ChEBI" id="CHEBI:30616"/>
        <dbReference type="ChEBI" id="CHEBI:60204"/>
        <dbReference type="ChEBI" id="CHEBI:60208"/>
        <dbReference type="ChEBI" id="CHEBI:456216"/>
        <dbReference type="EC" id="2.7.1.167"/>
    </reaction>
</comment>
<comment type="catalytic activity">
    <reaction evidence="1">
        <text>D-glycero-beta-D-manno-heptose 1-phosphate + ATP + H(+) = ADP-D-glycero-beta-D-manno-heptose + diphosphate</text>
        <dbReference type="Rhea" id="RHEA:27465"/>
        <dbReference type="ChEBI" id="CHEBI:15378"/>
        <dbReference type="ChEBI" id="CHEBI:30616"/>
        <dbReference type="ChEBI" id="CHEBI:33019"/>
        <dbReference type="ChEBI" id="CHEBI:59967"/>
        <dbReference type="ChEBI" id="CHEBI:61593"/>
        <dbReference type="EC" id="2.7.7.70"/>
    </reaction>
</comment>
<comment type="pathway">
    <text evidence="1">Nucleotide-sugar biosynthesis; ADP-L-glycero-beta-D-manno-heptose biosynthesis; ADP-L-glycero-beta-D-manno-heptose from D-glycero-beta-D-manno-heptose 7-phosphate: step 1/4.</text>
</comment>
<comment type="pathway">
    <text evidence="1">Nucleotide-sugar biosynthesis; ADP-L-glycero-beta-D-manno-heptose biosynthesis; ADP-L-glycero-beta-D-manno-heptose from D-glycero-beta-D-manno-heptose 7-phosphate: step 3/4.</text>
</comment>
<comment type="subunit">
    <text evidence="1">Homodimer.</text>
</comment>
<comment type="similarity">
    <text evidence="1">In the N-terminal section; belongs to the carbohydrate kinase PfkB family.</text>
</comment>
<comment type="similarity">
    <text evidence="1">In the C-terminal section; belongs to the cytidylyltransferase family.</text>
</comment>
<feature type="chain" id="PRO_1000148128" description="Bifunctional protein HldE">
    <location>
        <begin position="1"/>
        <end position="463"/>
    </location>
</feature>
<feature type="region of interest" description="Ribokinase">
    <location>
        <begin position="1"/>
        <end position="311"/>
    </location>
</feature>
<feature type="region of interest" description="Cytidylyltransferase">
    <location>
        <begin position="334"/>
        <end position="463"/>
    </location>
</feature>
<feature type="active site" evidence="1">
    <location>
        <position position="260"/>
    </location>
</feature>
<feature type="binding site" evidence="1">
    <location>
        <begin position="191"/>
        <end position="194"/>
    </location>
    <ligand>
        <name>ATP</name>
        <dbReference type="ChEBI" id="CHEBI:30616"/>
    </ligand>
</feature>
<accession>B5Z7L8</accession>
<sequence length="463" mass="50919">MKKILVVGDLIADYYLWGKSERLSPEAPVPVLEVKKESKNLGGAANVANNLISLKAKVFLCGVVGDDLEGKHFISALKARNIDTSGILTDKTRCTTLKTRIIAQNQQIARVDKEIKDPLNADLRKNLLDFITEKIQEIDGVILSDYNKGVLDFELTQTIITLANKHHKLILCDPKGKDYSKYSHASLITPNRFELEHALHLKLDSHASLSKALQILKETYQIAMPLVTLSEQGIAFLEQGELVNCPTIAKEVYDVTGAGDTVIASLTLSLLESMSLKDACEFANAAAAVVVGKMGSALASLEEIALILNQTHPKILPLEKLLETLEHNQQKIVFTNGCFDLLHKGHASYLQKAKALGDILIVGLNSDASVKRLKGDKRPIVSEKDRAFLLASLSCVDYVVVFEEDTPIQLIQALKPDILVKGADYLNKEVIGSEFAKETRLMEFGEGYSTSAIIEKIKRTCND</sequence>
<reference key="1">
    <citation type="journal article" date="2009" name="J. Bacteriol.">
        <title>The complete genome sequence of Helicobacter pylori strain G27.</title>
        <authorList>
            <person name="Baltrus D.A."/>
            <person name="Amieva M.R."/>
            <person name="Covacci A."/>
            <person name="Lowe T.M."/>
            <person name="Merrell D.S."/>
            <person name="Ottemann K.M."/>
            <person name="Stein M."/>
            <person name="Salama N.R."/>
            <person name="Guillemin K."/>
        </authorList>
    </citation>
    <scope>NUCLEOTIDE SEQUENCE [LARGE SCALE GENOMIC DNA]</scope>
    <source>
        <strain>G27</strain>
    </source>
</reference>